<name>SEN2_SCHPO</name>
<proteinExistence type="inferred from homology"/>
<feature type="chain" id="PRO_0000109461" description="Probable tRNA-splicing endonuclease subunit sen2">
    <location>
        <begin position="1"/>
        <end position="380"/>
    </location>
</feature>
<feature type="active site" evidence="1">
    <location>
        <position position="281"/>
    </location>
</feature>
<feature type="active site" evidence="1">
    <location>
        <position position="289"/>
    </location>
</feature>
<feature type="active site" evidence="1">
    <location>
        <position position="325"/>
    </location>
</feature>
<dbReference type="EC" id="4.6.1.16"/>
<dbReference type="EMBL" id="CU329670">
    <property type="protein sequence ID" value="CAD27500.1"/>
    <property type="molecule type" value="Genomic_DNA"/>
</dbReference>
<dbReference type="RefSeq" id="NP_001018222.1">
    <property type="nucleotide sequence ID" value="NM_001018702.2"/>
</dbReference>
<dbReference type="SMR" id="Q8TFH7"/>
<dbReference type="BioGRID" id="280474">
    <property type="interactions" value="1"/>
</dbReference>
<dbReference type="FunCoup" id="Q8TFH7">
    <property type="interactions" value="26"/>
</dbReference>
<dbReference type="STRING" id="284812.Q8TFH7"/>
<dbReference type="PaxDb" id="4896-SPAPB17E12.07c.1"/>
<dbReference type="EnsemblFungi" id="SPAPB17E12.07c.1">
    <property type="protein sequence ID" value="SPAPB17E12.07c.1:pep"/>
    <property type="gene ID" value="SPAPB17E12.07c"/>
</dbReference>
<dbReference type="GeneID" id="3361398"/>
<dbReference type="KEGG" id="spo:3361398"/>
<dbReference type="PomBase" id="SPAPB17E12.07c">
    <property type="gene designation" value="sen2"/>
</dbReference>
<dbReference type="VEuPathDB" id="FungiDB:SPAPB17E12.07c"/>
<dbReference type="eggNOG" id="KOG4685">
    <property type="taxonomic scope" value="Eukaryota"/>
</dbReference>
<dbReference type="HOGENOM" id="CLU_012847_2_0_1"/>
<dbReference type="InParanoid" id="Q8TFH7"/>
<dbReference type="OMA" id="YSHPYWK"/>
<dbReference type="PhylomeDB" id="Q8TFH7"/>
<dbReference type="PRO" id="PR:Q8TFH7"/>
<dbReference type="Proteomes" id="UP000002485">
    <property type="component" value="Chromosome I"/>
</dbReference>
<dbReference type="GO" id="GO:0005737">
    <property type="term" value="C:cytoplasm"/>
    <property type="evidence" value="ECO:0007005"/>
    <property type="project" value="PomBase"/>
</dbReference>
<dbReference type="GO" id="GO:0000214">
    <property type="term" value="C:tRNA-intron endonuclease complex"/>
    <property type="evidence" value="ECO:0000318"/>
    <property type="project" value="GO_Central"/>
</dbReference>
<dbReference type="GO" id="GO:0016829">
    <property type="term" value="F:lyase activity"/>
    <property type="evidence" value="ECO:0007669"/>
    <property type="project" value="UniProtKB-KW"/>
</dbReference>
<dbReference type="GO" id="GO:0003676">
    <property type="term" value="F:nucleic acid binding"/>
    <property type="evidence" value="ECO:0007669"/>
    <property type="project" value="InterPro"/>
</dbReference>
<dbReference type="GO" id="GO:0000213">
    <property type="term" value="F:tRNA-intron endonuclease activity"/>
    <property type="evidence" value="ECO:0000318"/>
    <property type="project" value="GO_Central"/>
</dbReference>
<dbReference type="GO" id="GO:0008033">
    <property type="term" value="P:tRNA processing"/>
    <property type="evidence" value="ECO:0000318"/>
    <property type="project" value="GO_Central"/>
</dbReference>
<dbReference type="GO" id="GO:0000379">
    <property type="term" value="P:tRNA-type intron splice site recognition and cleavage"/>
    <property type="evidence" value="ECO:0000318"/>
    <property type="project" value="GO_Central"/>
</dbReference>
<dbReference type="CDD" id="cd22363">
    <property type="entry name" value="tRNA-intron_lyase_C"/>
    <property type="match status" value="1"/>
</dbReference>
<dbReference type="FunFam" id="3.40.1350.10:FF:000011">
    <property type="entry name" value="tRNA-splicing endonuclease subunit Sen2"/>
    <property type="match status" value="1"/>
</dbReference>
<dbReference type="Gene3D" id="3.40.1350.10">
    <property type="match status" value="1"/>
</dbReference>
<dbReference type="InterPro" id="IPR011856">
    <property type="entry name" value="tRNA_endonuc-like_dom_sf"/>
</dbReference>
<dbReference type="InterPro" id="IPR036167">
    <property type="entry name" value="tRNA_intron_Endo_cat-like_sf"/>
</dbReference>
<dbReference type="InterPro" id="IPR006677">
    <property type="entry name" value="tRNA_intron_Endonuc_cat-like"/>
</dbReference>
<dbReference type="InterPro" id="IPR006676">
    <property type="entry name" value="tRNA_splic"/>
</dbReference>
<dbReference type="InterPro" id="IPR016589">
    <property type="entry name" value="tRNA_splic_SEN2"/>
</dbReference>
<dbReference type="PANTHER" id="PTHR21227">
    <property type="entry name" value="TRNA-SPLICING ENDONUCLEASE SUBUNIT SEN2"/>
    <property type="match status" value="1"/>
</dbReference>
<dbReference type="PANTHER" id="PTHR21227:SF0">
    <property type="entry name" value="TRNA-SPLICING ENDONUCLEASE SUBUNIT SEN2"/>
    <property type="match status" value="1"/>
</dbReference>
<dbReference type="Pfam" id="PF01974">
    <property type="entry name" value="tRNA_int_endo"/>
    <property type="match status" value="1"/>
</dbReference>
<dbReference type="PIRSF" id="PIRSF011789">
    <property type="entry name" value="tRNA_splic_SEN2"/>
    <property type="match status" value="1"/>
</dbReference>
<dbReference type="SUPFAM" id="SSF53032">
    <property type="entry name" value="tRNA-intron endonuclease catalytic domain-like"/>
    <property type="match status" value="1"/>
</dbReference>
<protein>
    <recommendedName>
        <fullName>Probable tRNA-splicing endonuclease subunit sen2</fullName>
        <ecNumber>4.6.1.16</ecNumber>
    </recommendedName>
    <alternativeName>
        <fullName>tRNA-intron endonuclease sen2</fullName>
    </alternativeName>
</protein>
<comment type="function">
    <text evidence="1">Constitutes one of the two catalytic subunit of the tRNA-splicing endonuclease complex, a complex responsible for identification and cleavage of the splice sites in pre-tRNA. It cleaves pre-tRNA at the 5'- and 3'-splice sites to release the intron. The products are an intron and two tRNA half-molecules bearing 2',3'-cyclic phosphate and 5'-OH termini. There are no conserved sequences at the splice sites, but the intron is invariably located at the same site in the gene, placing the splice sites an invariant distance from the constant structural features of the tRNA body. This subunit may anchor the endonuclease complex to the nuclear membrane. Probably carries the active site for 5'-splice site cleavage (By similarity).</text>
</comment>
<comment type="catalytic activity">
    <reaction>
        <text>pretRNA = a 3'-half-tRNA molecule with a 5'-OH end + a 5'-half-tRNA molecule with a 2',3'-cyclic phosphate end + an intron with a 2',3'-cyclic phosphate and a 5'-hydroxyl terminus.</text>
        <dbReference type="EC" id="4.6.1.16"/>
    </reaction>
</comment>
<comment type="subunit">
    <text evidence="1">Heterotetramer composed of sen2, sen15, sen34 and sen54. Interacts directly with sen54 (By similarity).</text>
</comment>
<comment type="similarity">
    <text evidence="2">Belongs to the tRNA-intron endonuclease family.</text>
</comment>
<reference key="1">
    <citation type="journal article" date="2002" name="Nature">
        <title>The genome sequence of Schizosaccharomyces pombe.</title>
        <authorList>
            <person name="Wood V."/>
            <person name="Gwilliam R."/>
            <person name="Rajandream M.A."/>
            <person name="Lyne M.H."/>
            <person name="Lyne R."/>
            <person name="Stewart A."/>
            <person name="Sgouros J.G."/>
            <person name="Peat N."/>
            <person name="Hayles J."/>
            <person name="Baker S.G."/>
            <person name="Basham D."/>
            <person name="Bowman S."/>
            <person name="Brooks K."/>
            <person name="Brown D."/>
            <person name="Brown S."/>
            <person name="Chillingworth T."/>
            <person name="Churcher C.M."/>
            <person name="Collins M."/>
            <person name="Connor R."/>
            <person name="Cronin A."/>
            <person name="Davis P."/>
            <person name="Feltwell T."/>
            <person name="Fraser A."/>
            <person name="Gentles S."/>
            <person name="Goble A."/>
            <person name="Hamlin N."/>
            <person name="Harris D.E."/>
            <person name="Hidalgo J."/>
            <person name="Hodgson G."/>
            <person name="Holroyd S."/>
            <person name="Hornsby T."/>
            <person name="Howarth S."/>
            <person name="Huckle E.J."/>
            <person name="Hunt S."/>
            <person name="Jagels K."/>
            <person name="James K.D."/>
            <person name="Jones L."/>
            <person name="Jones M."/>
            <person name="Leather S."/>
            <person name="McDonald S."/>
            <person name="McLean J."/>
            <person name="Mooney P."/>
            <person name="Moule S."/>
            <person name="Mungall K.L."/>
            <person name="Murphy L.D."/>
            <person name="Niblett D."/>
            <person name="Odell C."/>
            <person name="Oliver K."/>
            <person name="O'Neil S."/>
            <person name="Pearson D."/>
            <person name="Quail M.A."/>
            <person name="Rabbinowitsch E."/>
            <person name="Rutherford K.M."/>
            <person name="Rutter S."/>
            <person name="Saunders D."/>
            <person name="Seeger K."/>
            <person name="Sharp S."/>
            <person name="Skelton J."/>
            <person name="Simmonds M.N."/>
            <person name="Squares R."/>
            <person name="Squares S."/>
            <person name="Stevens K."/>
            <person name="Taylor K."/>
            <person name="Taylor R.G."/>
            <person name="Tivey A."/>
            <person name="Walsh S.V."/>
            <person name="Warren T."/>
            <person name="Whitehead S."/>
            <person name="Woodward J.R."/>
            <person name="Volckaert G."/>
            <person name="Aert R."/>
            <person name="Robben J."/>
            <person name="Grymonprez B."/>
            <person name="Weltjens I."/>
            <person name="Vanstreels E."/>
            <person name="Rieger M."/>
            <person name="Schaefer M."/>
            <person name="Mueller-Auer S."/>
            <person name="Gabel C."/>
            <person name="Fuchs M."/>
            <person name="Duesterhoeft A."/>
            <person name="Fritzc C."/>
            <person name="Holzer E."/>
            <person name="Moestl D."/>
            <person name="Hilbert H."/>
            <person name="Borzym K."/>
            <person name="Langer I."/>
            <person name="Beck A."/>
            <person name="Lehrach H."/>
            <person name="Reinhardt R."/>
            <person name="Pohl T.M."/>
            <person name="Eger P."/>
            <person name="Zimmermann W."/>
            <person name="Wedler H."/>
            <person name="Wambutt R."/>
            <person name="Purnelle B."/>
            <person name="Goffeau A."/>
            <person name="Cadieu E."/>
            <person name="Dreano S."/>
            <person name="Gloux S."/>
            <person name="Lelaure V."/>
            <person name="Mottier S."/>
            <person name="Galibert F."/>
            <person name="Aves S.J."/>
            <person name="Xiang Z."/>
            <person name="Hunt C."/>
            <person name="Moore K."/>
            <person name="Hurst S.M."/>
            <person name="Lucas M."/>
            <person name="Rochet M."/>
            <person name="Gaillardin C."/>
            <person name="Tallada V.A."/>
            <person name="Garzon A."/>
            <person name="Thode G."/>
            <person name="Daga R.R."/>
            <person name="Cruzado L."/>
            <person name="Jimenez J."/>
            <person name="Sanchez M."/>
            <person name="del Rey F."/>
            <person name="Benito J."/>
            <person name="Dominguez A."/>
            <person name="Revuelta J.L."/>
            <person name="Moreno S."/>
            <person name="Armstrong J."/>
            <person name="Forsburg S.L."/>
            <person name="Cerutti L."/>
            <person name="Lowe T."/>
            <person name="McCombie W.R."/>
            <person name="Paulsen I."/>
            <person name="Potashkin J."/>
            <person name="Shpakovski G.V."/>
            <person name="Ussery D."/>
            <person name="Barrell B.G."/>
            <person name="Nurse P."/>
        </authorList>
    </citation>
    <scope>NUCLEOTIDE SEQUENCE [LARGE SCALE GENOMIC DNA]</scope>
    <source>
        <strain>972 / ATCC 24843</strain>
    </source>
</reference>
<sequence>MSKNHEVYKDALPISLAYPLPPIILTNPLTWIPYIYRYLFRKTPRQVQWQCQLHESDLSCVVTDSEAIKKFWTSGFFGKGNLSRSEPTWHTRTKRSLGLLGFDEDLVAEEVTARRRFQRKQFKAQRAYRENRARERQLLLENGKPIPASLEEDAELPEYLTKSLKDFSRVSENPYHITSVPNVEHLQLTFPEAFFLASLGVLRINYENPNFELLPILKLFANIVANSVALTHDYSLQQSHEDPIIEPDNKFLTELAAYFYFRQQGWVVKNGTKFSVDFLLYKKGPVFSHAEFAILLIPCVGNKQKYNMQWHEVHCLNRVIAQVKKSLILCYVQCPSIEDFNKIWKNQASMNEWDWAESVLRQYLIRCVTLRRWVPSRNRD</sequence>
<evidence type="ECO:0000250" key="1"/>
<evidence type="ECO:0000305" key="2"/>
<organism>
    <name type="scientific">Schizosaccharomyces pombe (strain 972 / ATCC 24843)</name>
    <name type="common">Fission yeast</name>
    <dbReference type="NCBI Taxonomy" id="284812"/>
    <lineage>
        <taxon>Eukaryota</taxon>
        <taxon>Fungi</taxon>
        <taxon>Dikarya</taxon>
        <taxon>Ascomycota</taxon>
        <taxon>Taphrinomycotina</taxon>
        <taxon>Schizosaccharomycetes</taxon>
        <taxon>Schizosaccharomycetales</taxon>
        <taxon>Schizosaccharomycetaceae</taxon>
        <taxon>Schizosaccharomyces</taxon>
    </lineage>
</organism>
<gene>
    <name type="primary">sen2</name>
    <name type="ORF">SPAPB17E12.07c</name>
</gene>
<keyword id="KW-0456">Lyase</keyword>
<keyword id="KW-1185">Reference proteome</keyword>
<keyword id="KW-0819">tRNA processing</keyword>
<accession>Q8TFH7</accession>